<gene>
    <name evidence="1" type="primary">ubiB</name>
    <name type="ordered locus">PC1_4054</name>
</gene>
<keyword id="KW-0067">ATP-binding</keyword>
<keyword id="KW-0997">Cell inner membrane</keyword>
<keyword id="KW-1003">Cell membrane</keyword>
<keyword id="KW-0418">Kinase</keyword>
<keyword id="KW-0472">Membrane</keyword>
<keyword id="KW-0547">Nucleotide-binding</keyword>
<keyword id="KW-0808">Transferase</keyword>
<keyword id="KW-0812">Transmembrane</keyword>
<keyword id="KW-1133">Transmembrane helix</keyword>
<keyword id="KW-0831">Ubiquinone biosynthesis</keyword>
<name>UBIB_PECCP</name>
<reference key="1">
    <citation type="submission" date="2009-07" db="EMBL/GenBank/DDBJ databases">
        <title>Complete sequence of Pectobacterium carotovorum subsp. carotovorum PC1.</title>
        <authorList>
            <consortium name="US DOE Joint Genome Institute"/>
            <person name="Lucas S."/>
            <person name="Copeland A."/>
            <person name="Lapidus A."/>
            <person name="Glavina del Rio T."/>
            <person name="Tice H."/>
            <person name="Bruce D."/>
            <person name="Goodwin L."/>
            <person name="Pitluck S."/>
            <person name="Munk A.C."/>
            <person name="Brettin T."/>
            <person name="Detter J.C."/>
            <person name="Han C."/>
            <person name="Tapia R."/>
            <person name="Larimer F."/>
            <person name="Land M."/>
            <person name="Hauser L."/>
            <person name="Kyrpides N."/>
            <person name="Mikhailova N."/>
            <person name="Balakrishnan V."/>
            <person name="Glasner J."/>
            <person name="Perna N.T."/>
        </authorList>
    </citation>
    <scope>NUCLEOTIDE SEQUENCE [LARGE SCALE GENOMIC DNA]</scope>
    <source>
        <strain>PC1</strain>
    </source>
</reference>
<feature type="chain" id="PRO_1000206015" description="Probable protein kinase UbiB">
    <location>
        <begin position="1"/>
        <end position="546"/>
    </location>
</feature>
<feature type="transmembrane region" description="Helical" evidence="1">
    <location>
        <begin position="499"/>
        <end position="519"/>
    </location>
</feature>
<feature type="transmembrane region" description="Helical" evidence="1">
    <location>
        <begin position="521"/>
        <end position="541"/>
    </location>
</feature>
<feature type="domain" description="Protein kinase" evidence="1">
    <location>
        <begin position="124"/>
        <end position="502"/>
    </location>
</feature>
<feature type="active site" description="Proton acceptor" evidence="1">
    <location>
        <position position="288"/>
    </location>
</feature>
<feature type="binding site" evidence="1">
    <location>
        <begin position="130"/>
        <end position="138"/>
    </location>
    <ligand>
        <name>ATP</name>
        <dbReference type="ChEBI" id="CHEBI:30616"/>
    </ligand>
</feature>
<feature type="binding site" evidence="1">
    <location>
        <position position="153"/>
    </location>
    <ligand>
        <name>ATP</name>
        <dbReference type="ChEBI" id="CHEBI:30616"/>
    </ligand>
</feature>
<comment type="function">
    <text evidence="1">Is probably a protein kinase regulator of UbiI activity which is involved in aerobic coenzyme Q (ubiquinone) biosynthesis.</text>
</comment>
<comment type="pathway">
    <text>Cofactor biosynthesis; ubiquinone biosynthesis [regulation].</text>
</comment>
<comment type="subcellular location">
    <subcellularLocation>
        <location evidence="1">Cell inner membrane</location>
        <topology evidence="1">Multi-pass membrane protein</topology>
    </subcellularLocation>
</comment>
<comment type="similarity">
    <text evidence="1">Belongs to the ABC1 family. UbiB subfamily.</text>
</comment>
<organism>
    <name type="scientific">Pectobacterium carotovorum subsp. carotovorum (strain PC1)</name>
    <dbReference type="NCBI Taxonomy" id="561230"/>
    <lineage>
        <taxon>Bacteria</taxon>
        <taxon>Pseudomonadati</taxon>
        <taxon>Pseudomonadota</taxon>
        <taxon>Gammaproteobacteria</taxon>
        <taxon>Enterobacterales</taxon>
        <taxon>Pectobacteriaceae</taxon>
        <taxon>Pectobacterium</taxon>
    </lineage>
</organism>
<sequence length="546" mass="62856">MTPSELRRLYSIVRVLLSYGLDELIPKMRLTFPLRAGRRLLFWLPNRHRNMPLGERLRLALQELGPVWIKFGQMMSTRRDLFPPAIADQLAMLQDKVEPFDGKLAREQIELSMGGIPLEEWFDDFDIKPLASASIAQVHTACLKSTGKEIVIKVIRPDILPVIKADMRLMKRLAGWLPRLLPDGRRLRPREVVLEYEKTLLDELNLLREAANAIQLRRNFENSPMLYVPEIYSDYCSEGMLVMERIYGIPVSDVDALKANGTDMKLLAERGVQVFFTQVFRDSFFHADMHPGNIFISYEHPEDPQYIGIDCGIVGSLNKEDKRYLAENFIAFFNRDYRKVAELHVDSGWVPADTNVADFEFAIRTVCEPIFEKPLAEISFGHVLLNLFNTARRFNMEVQPQLVLLQKTLLYIEGVGRQLYPQLDLWKTAKPFLETWMKRQVGLPAVFRALKEKAPFWAEKLPEVPELFYDGLRQHKMLKHSVDQLAYELKTQQARQGQSRYLLGIGATLLISGTLLLISRVEADMVPAGLMAAGIVTWIIGWRRTR</sequence>
<accession>C6DI75</accession>
<protein>
    <recommendedName>
        <fullName evidence="1">Probable protein kinase UbiB</fullName>
        <ecNumber evidence="1">2.7.-.-</ecNumber>
    </recommendedName>
    <alternativeName>
        <fullName evidence="1">Ubiquinone biosynthesis protein UbiB</fullName>
    </alternativeName>
</protein>
<proteinExistence type="inferred from homology"/>
<dbReference type="EC" id="2.7.-.-" evidence="1"/>
<dbReference type="EMBL" id="CP001657">
    <property type="protein sequence ID" value="ACT15069.1"/>
    <property type="molecule type" value="Genomic_DNA"/>
</dbReference>
<dbReference type="RefSeq" id="WP_015842146.1">
    <property type="nucleotide sequence ID" value="NC_012917.1"/>
</dbReference>
<dbReference type="SMR" id="C6DI75"/>
<dbReference type="STRING" id="561230.PC1_4054"/>
<dbReference type="KEGG" id="pct:PC1_4054"/>
<dbReference type="eggNOG" id="COG0661">
    <property type="taxonomic scope" value="Bacteria"/>
</dbReference>
<dbReference type="HOGENOM" id="CLU_006533_0_0_6"/>
<dbReference type="OrthoDB" id="9795390at2"/>
<dbReference type="UniPathway" id="UPA00232"/>
<dbReference type="Proteomes" id="UP000002736">
    <property type="component" value="Chromosome"/>
</dbReference>
<dbReference type="GO" id="GO:0005886">
    <property type="term" value="C:plasma membrane"/>
    <property type="evidence" value="ECO:0007669"/>
    <property type="project" value="UniProtKB-SubCell"/>
</dbReference>
<dbReference type="GO" id="GO:0005524">
    <property type="term" value="F:ATP binding"/>
    <property type="evidence" value="ECO:0007669"/>
    <property type="project" value="UniProtKB-KW"/>
</dbReference>
<dbReference type="GO" id="GO:0004672">
    <property type="term" value="F:protein kinase activity"/>
    <property type="evidence" value="ECO:0007669"/>
    <property type="project" value="UniProtKB-UniRule"/>
</dbReference>
<dbReference type="GO" id="GO:0010795">
    <property type="term" value="P:regulation of ubiquinone biosynthetic process"/>
    <property type="evidence" value="ECO:0007669"/>
    <property type="project" value="UniProtKB-UniRule"/>
</dbReference>
<dbReference type="GO" id="GO:0006744">
    <property type="term" value="P:ubiquinone biosynthetic process"/>
    <property type="evidence" value="ECO:0007669"/>
    <property type="project" value="UniProtKB-UniPathway"/>
</dbReference>
<dbReference type="CDD" id="cd13972">
    <property type="entry name" value="UbiB"/>
    <property type="match status" value="1"/>
</dbReference>
<dbReference type="HAMAP" id="MF_00414">
    <property type="entry name" value="UbiB"/>
    <property type="match status" value="1"/>
</dbReference>
<dbReference type="InterPro" id="IPR004147">
    <property type="entry name" value="ABC1_dom"/>
</dbReference>
<dbReference type="InterPro" id="IPR011009">
    <property type="entry name" value="Kinase-like_dom_sf"/>
</dbReference>
<dbReference type="InterPro" id="IPR010232">
    <property type="entry name" value="UbiB"/>
</dbReference>
<dbReference type="InterPro" id="IPR045308">
    <property type="entry name" value="UbiB_bact"/>
</dbReference>
<dbReference type="InterPro" id="IPR050154">
    <property type="entry name" value="UbiB_kinase"/>
</dbReference>
<dbReference type="NCBIfam" id="NF003404">
    <property type="entry name" value="PRK04750.1"/>
    <property type="match status" value="1"/>
</dbReference>
<dbReference type="NCBIfam" id="TIGR01982">
    <property type="entry name" value="UbiB"/>
    <property type="match status" value="1"/>
</dbReference>
<dbReference type="PANTHER" id="PTHR10566">
    <property type="entry name" value="CHAPERONE-ACTIVITY OF BC1 COMPLEX CABC1 -RELATED"/>
    <property type="match status" value="1"/>
</dbReference>
<dbReference type="PANTHER" id="PTHR10566:SF113">
    <property type="entry name" value="PROTEIN ACTIVITY OF BC1 COMPLEX KINASE 7, CHLOROPLASTIC"/>
    <property type="match status" value="1"/>
</dbReference>
<dbReference type="Pfam" id="PF03109">
    <property type="entry name" value="ABC1"/>
    <property type="match status" value="1"/>
</dbReference>
<dbReference type="SUPFAM" id="SSF56112">
    <property type="entry name" value="Protein kinase-like (PK-like)"/>
    <property type="match status" value="1"/>
</dbReference>
<evidence type="ECO:0000255" key="1">
    <source>
        <dbReference type="HAMAP-Rule" id="MF_00414"/>
    </source>
</evidence>